<accession>P07608</accession>
<accession>Q76ZR1</accession>
<accession>Q8JQ91</accession>
<proteinExistence type="evidence at protein level"/>
<sequence>MSWYEKYNIVLNPPKRCSFACADNLTTILAEDGNNIRAILYSQPKKLKILQDFLATSRNKMFLYKILDDEIRRVLT</sequence>
<name>PG128_VACCW</name>
<protein>
    <recommendedName>
        <fullName>Protein OPG128</fullName>
    </recommendedName>
</protein>
<gene>
    <name type="primary">OPG128</name>
    <name type="ordered locus">VACWR121</name>
    <name type="ORF">A2.5L</name>
</gene>
<evidence type="ECO:0000255" key="1"/>
<evidence type="ECO:0000269" key="2">
    <source>
    </source>
</evidence>
<evidence type="ECO:0000269" key="3">
    <source>
    </source>
</evidence>
<evidence type="ECO:0000269" key="4">
    <source>
    </source>
</evidence>
<evidence type="ECO:0000305" key="5"/>
<dbReference type="EMBL" id="X03729">
    <property type="protein sequence ID" value="CAA27365.1"/>
    <property type="molecule type" value="Genomic_DNA"/>
</dbReference>
<dbReference type="EMBL" id="AY243312">
    <property type="protein sequence ID" value="AAO89400.1"/>
    <property type="molecule type" value="Genomic_DNA"/>
</dbReference>
<dbReference type="EMBL" id="AF516336">
    <property type="protein sequence ID" value="AAM49617.1"/>
    <property type="molecule type" value="Genomic_DNA"/>
</dbReference>
<dbReference type="PIR" id="A23768">
    <property type="entry name" value="WMVZR0"/>
</dbReference>
<dbReference type="RefSeq" id="YP_233003.1">
    <property type="nucleotide sequence ID" value="NC_006998.1"/>
</dbReference>
<dbReference type="DNASU" id="3707519"/>
<dbReference type="GeneID" id="3707519"/>
<dbReference type="KEGG" id="vg:3707519"/>
<dbReference type="Proteomes" id="UP000000344">
    <property type="component" value="Genome"/>
</dbReference>
<dbReference type="InterPro" id="IPR007952">
    <property type="entry name" value="Poxvirus_A2.5L"/>
</dbReference>
<dbReference type="Pfam" id="PF05288">
    <property type="entry name" value="Pox_A3L"/>
    <property type="match status" value="1"/>
</dbReference>
<organismHost>
    <name type="scientific">Bos taurus</name>
    <name type="common">Bovine</name>
    <dbReference type="NCBI Taxonomy" id="9913"/>
</organismHost>
<feature type="chain" id="PRO_0000099744" description="Protein OPG128">
    <location>
        <begin position="1"/>
        <end position="76"/>
    </location>
</feature>
<feature type="disulfide bond" description="Redox-active" evidence="1">
    <location>
        <begin position="17"/>
        <end position="21"/>
    </location>
</feature>
<feature type="sequence variant">
    <original>NP</original>
    <variation>KS</variation>
    <location>
        <begin position="12"/>
        <end position="13"/>
    </location>
</feature>
<feature type="sequence variant">
    <original>N</original>
    <variation>H</variation>
    <location>
        <position position="35"/>
    </location>
</feature>
<feature type="mutagenesis site" description="Accumulation of reduced G4, L1, and F9." evidence="3">
    <original>C</original>
    <variation>S</variation>
    <location>
        <position position="17"/>
    </location>
</feature>
<feature type="mutagenesis site" description="Accumulation of reduced G4, L1, and F9." evidence="3">
    <original>C</original>
    <variation>S</variation>
    <location>
        <position position="21"/>
    </location>
</feature>
<keyword id="KW-1015">Disulfide bond</keyword>
<keyword id="KW-0426">Late protein</keyword>
<keyword id="KW-0676">Redox-active center</keyword>
<keyword id="KW-1185">Reference proteome</keyword>
<comment type="function">
    <text evidence="2 3">Late protein which probably participates in disulfide bond formation by functioning as a thiol-disulfide transfer protein between membrane-associated OPG072 and OPG08. The complete pathway for formation of disulfide bonds in intracellular virion membrane proteins sequentially involves oxidation of OPG072, OPG128 and OPG08.</text>
</comment>
<comment type="subunit">
    <text evidence="2 3">Interacts with sulfhydryl oxidase OPG072; this interaction involves formation of a transient disulfide-bonded intermediate, allowing disulfide bond transfer. Interacts with OPG088; this interaction involves formation of a transient disulfide-bonded intermediate, allowing disulfide bond transfer.</text>
</comment>
<comment type="induction">
    <text evidence="4">Expressed in the late phase of the viral replicative cycle.</text>
</comment>
<comment type="similarity">
    <text evidence="5">Belongs to the orthopoxvirus OPG128 family.</text>
</comment>
<reference key="1">
    <citation type="journal article" date="1986" name="Nucleic Acids Res.">
        <title>A tandemly-oriented late gene cluster within the vaccinia virus genome.</title>
        <authorList>
            <person name="Weinrich S.L."/>
            <person name="Hruby D.E."/>
        </authorList>
    </citation>
    <scope>NUCLEOTIDE SEQUENCE [GENOMIC DNA]</scope>
    <scope>INDUCTION</scope>
</reference>
<reference key="2">
    <citation type="submission" date="2003-02" db="EMBL/GenBank/DDBJ databases">
        <title>Sequencing of the coding region of Vaccinia-WR to an average 9-fold redundancy and an error rate of 0.16/10kb.</title>
        <authorList>
            <person name="Esposito J.J."/>
            <person name="Frace A.M."/>
            <person name="Sammons S.A."/>
            <person name="Olsen-Rasmussen M."/>
            <person name="Osborne J."/>
            <person name="Wohlhueter R."/>
        </authorList>
    </citation>
    <scope>NUCLEOTIDE SEQUENCE [LARGE SCALE GENOMIC DNA]</scope>
</reference>
<reference key="3">
    <citation type="journal article" date="2002" name="Proc. Natl. Acad. Sci. U.S.A.">
        <title>Complete pathway for protein disulfide bond formation encoded by poxviruses.</title>
        <authorList>
            <person name="Senkevich T.G."/>
            <person name="White C.L."/>
            <person name="Koonin E.V."/>
            <person name="Moss B."/>
        </authorList>
    </citation>
    <scope>NUCLEOTIDE SEQUENCE [GENOMIC DNA]</scope>
    <scope>INTERACTION WITH OPG072</scope>
    <scope>INTERACTION WITH OPG088</scope>
    <scope>FUNCTION</scope>
</reference>
<reference key="4">
    <citation type="journal article" date="2002" name="Virology">
        <title>Expression of the vaccinia virus A2.5L redox protein is required for virion morphogenesis.</title>
        <authorList>
            <person name="Senkevich T.G."/>
            <person name="White C.L."/>
            <person name="Weisberg A."/>
            <person name="Granek J.A."/>
            <person name="Wolffe E.J."/>
            <person name="Koonin E.V."/>
            <person name="Moss B."/>
        </authorList>
    </citation>
    <scope>FUNCTION</scope>
    <scope>SUBUNIT</scope>
    <scope>MUTAGENESIS OF CYS-17 AND CYS-21</scope>
</reference>
<organism>
    <name type="scientific">Vaccinia virus (strain Western Reserve)</name>
    <name type="common">VACV</name>
    <name type="synonym">Vaccinia virus (strain WR)</name>
    <dbReference type="NCBI Taxonomy" id="10254"/>
    <lineage>
        <taxon>Viruses</taxon>
        <taxon>Varidnaviria</taxon>
        <taxon>Bamfordvirae</taxon>
        <taxon>Nucleocytoviricota</taxon>
        <taxon>Pokkesviricetes</taxon>
        <taxon>Chitovirales</taxon>
        <taxon>Poxviridae</taxon>
        <taxon>Chordopoxvirinae</taxon>
        <taxon>Orthopoxvirus</taxon>
        <taxon>Vaccinia virus</taxon>
    </lineage>
</organism>